<organism>
    <name type="scientific">Homo sapiens</name>
    <name type="common">Human</name>
    <dbReference type="NCBI Taxonomy" id="9606"/>
    <lineage>
        <taxon>Eukaryota</taxon>
        <taxon>Metazoa</taxon>
        <taxon>Chordata</taxon>
        <taxon>Craniata</taxon>
        <taxon>Vertebrata</taxon>
        <taxon>Euteleostomi</taxon>
        <taxon>Mammalia</taxon>
        <taxon>Eutheria</taxon>
        <taxon>Euarchontoglires</taxon>
        <taxon>Primates</taxon>
        <taxon>Haplorrhini</taxon>
        <taxon>Catarrhini</taxon>
        <taxon>Hominidae</taxon>
        <taxon>Homo</taxon>
    </lineage>
</organism>
<feature type="signal peptide" evidence="1">
    <location>
        <begin position="1"/>
        <end position="22"/>
    </location>
</feature>
<feature type="chain" id="PRO_0000239662" description="Integral membrane protein GPR180">
    <location>
        <begin position="23"/>
        <end position="440"/>
    </location>
</feature>
<feature type="transmembrane region" description="Helical" evidence="1">
    <location>
        <begin position="173"/>
        <end position="193"/>
    </location>
</feature>
<feature type="transmembrane region" description="Helical" evidence="1">
    <location>
        <begin position="202"/>
        <end position="222"/>
    </location>
</feature>
<feature type="transmembrane region" description="Helical" evidence="1">
    <location>
        <begin position="249"/>
        <end position="269"/>
    </location>
</feature>
<feature type="transmembrane region" description="Helical" evidence="1">
    <location>
        <begin position="284"/>
        <end position="304"/>
    </location>
</feature>
<feature type="transmembrane region" description="Helical" evidence="1">
    <location>
        <begin position="321"/>
        <end position="341"/>
    </location>
</feature>
<feature type="transmembrane region" description="Helical" evidence="1">
    <location>
        <begin position="360"/>
        <end position="380"/>
    </location>
</feature>
<feature type="transmembrane region" description="Helical" evidence="1">
    <location>
        <begin position="389"/>
        <end position="409"/>
    </location>
</feature>
<feature type="glycosylation site" description="N-linked (GlcNAc...) asparagine" evidence="1">
    <location>
        <position position="105"/>
    </location>
</feature>
<feature type="glycosylation site" description="N-linked (GlcNAc...) asparagine" evidence="1">
    <location>
        <position position="110"/>
    </location>
</feature>
<feature type="sequence variant" id="VAR_035925" description="In a breast cancer sample; somatic mutation." evidence="2">
    <original>T</original>
    <variation>N</variation>
    <location>
        <position position="32"/>
    </location>
</feature>
<reference key="1">
    <citation type="journal article" date="2004" name="Nat. Genet.">
        <title>Complete sequencing and characterization of 21,243 full-length human cDNAs.</title>
        <authorList>
            <person name="Ota T."/>
            <person name="Suzuki Y."/>
            <person name="Nishikawa T."/>
            <person name="Otsuki T."/>
            <person name="Sugiyama T."/>
            <person name="Irie R."/>
            <person name="Wakamatsu A."/>
            <person name="Hayashi K."/>
            <person name="Sato H."/>
            <person name="Nagai K."/>
            <person name="Kimura K."/>
            <person name="Makita H."/>
            <person name="Sekine M."/>
            <person name="Obayashi M."/>
            <person name="Nishi T."/>
            <person name="Shibahara T."/>
            <person name="Tanaka T."/>
            <person name="Ishii S."/>
            <person name="Yamamoto J."/>
            <person name="Saito K."/>
            <person name="Kawai Y."/>
            <person name="Isono Y."/>
            <person name="Nakamura Y."/>
            <person name="Nagahari K."/>
            <person name="Murakami K."/>
            <person name="Yasuda T."/>
            <person name="Iwayanagi T."/>
            <person name="Wagatsuma M."/>
            <person name="Shiratori A."/>
            <person name="Sudo H."/>
            <person name="Hosoiri T."/>
            <person name="Kaku Y."/>
            <person name="Kodaira H."/>
            <person name="Kondo H."/>
            <person name="Sugawara M."/>
            <person name="Takahashi M."/>
            <person name="Kanda K."/>
            <person name="Yokoi T."/>
            <person name="Furuya T."/>
            <person name="Kikkawa E."/>
            <person name="Omura Y."/>
            <person name="Abe K."/>
            <person name="Kamihara K."/>
            <person name="Katsuta N."/>
            <person name="Sato K."/>
            <person name="Tanikawa M."/>
            <person name="Yamazaki M."/>
            <person name="Ninomiya K."/>
            <person name="Ishibashi T."/>
            <person name="Yamashita H."/>
            <person name="Murakawa K."/>
            <person name="Fujimori K."/>
            <person name="Tanai H."/>
            <person name="Kimata M."/>
            <person name="Watanabe M."/>
            <person name="Hiraoka S."/>
            <person name="Chiba Y."/>
            <person name="Ishida S."/>
            <person name="Ono Y."/>
            <person name="Takiguchi S."/>
            <person name="Watanabe S."/>
            <person name="Yosida M."/>
            <person name="Hotuta T."/>
            <person name="Kusano J."/>
            <person name="Kanehori K."/>
            <person name="Takahashi-Fujii A."/>
            <person name="Hara H."/>
            <person name="Tanase T.-O."/>
            <person name="Nomura Y."/>
            <person name="Togiya S."/>
            <person name="Komai F."/>
            <person name="Hara R."/>
            <person name="Takeuchi K."/>
            <person name="Arita M."/>
            <person name="Imose N."/>
            <person name="Musashino K."/>
            <person name="Yuuki H."/>
            <person name="Oshima A."/>
            <person name="Sasaki N."/>
            <person name="Aotsuka S."/>
            <person name="Yoshikawa Y."/>
            <person name="Matsunawa H."/>
            <person name="Ichihara T."/>
            <person name="Shiohata N."/>
            <person name="Sano S."/>
            <person name="Moriya S."/>
            <person name="Momiyama H."/>
            <person name="Satoh N."/>
            <person name="Takami S."/>
            <person name="Terashima Y."/>
            <person name="Suzuki O."/>
            <person name="Nakagawa S."/>
            <person name="Senoh A."/>
            <person name="Mizoguchi H."/>
            <person name="Goto Y."/>
            <person name="Shimizu F."/>
            <person name="Wakebe H."/>
            <person name="Hishigaki H."/>
            <person name="Watanabe T."/>
            <person name="Sugiyama A."/>
            <person name="Takemoto M."/>
            <person name="Kawakami B."/>
            <person name="Yamazaki M."/>
            <person name="Watanabe K."/>
            <person name="Kumagai A."/>
            <person name="Itakura S."/>
            <person name="Fukuzumi Y."/>
            <person name="Fujimori Y."/>
            <person name="Komiyama M."/>
            <person name="Tashiro H."/>
            <person name="Tanigami A."/>
            <person name="Fujiwara T."/>
            <person name="Ono T."/>
            <person name="Yamada K."/>
            <person name="Fujii Y."/>
            <person name="Ozaki K."/>
            <person name="Hirao M."/>
            <person name="Ohmori Y."/>
            <person name="Kawabata A."/>
            <person name="Hikiji T."/>
            <person name="Kobatake N."/>
            <person name="Inagaki H."/>
            <person name="Ikema Y."/>
            <person name="Okamoto S."/>
            <person name="Okitani R."/>
            <person name="Kawakami T."/>
            <person name="Noguchi S."/>
            <person name="Itoh T."/>
            <person name="Shigeta K."/>
            <person name="Senba T."/>
            <person name="Matsumura K."/>
            <person name="Nakajima Y."/>
            <person name="Mizuno T."/>
            <person name="Morinaga M."/>
            <person name="Sasaki M."/>
            <person name="Togashi T."/>
            <person name="Oyama M."/>
            <person name="Hata H."/>
            <person name="Watanabe M."/>
            <person name="Komatsu T."/>
            <person name="Mizushima-Sugano J."/>
            <person name="Satoh T."/>
            <person name="Shirai Y."/>
            <person name="Takahashi Y."/>
            <person name="Nakagawa K."/>
            <person name="Okumura K."/>
            <person name="Nagase T."/>
            <person name="Nomura N."/>
            <person name="Kikuchi H."/>
            <person name="Masuho Y."/>
            <person name="Yamashita R."/>
            <person name="Nakai K."/>
            <person name="Yada T."/>
            <person name="Nakamura Y."/>
            <person name="Ohara O."/>
            <person name="Isogai T."/>
            <person name="Sugano S."/>
        </authorList>
    </citation>
    <scope>NUCLEOTIDE SEQUENCE [LARGE SCALE MRNA]</scope>
    <source>
        <tissue>Brain</tissue>
    </source>
</reference>
<reference key="2">
    <citation type="journal article" date="2004" name="Nature">
        <title>The DNA sequence and analysis of human chromosome 13.</title>
        <authorList>
            <person name="Dunham A."/>
            <person name="Matthews L.H."/>
            <person name="Burton J."/>
            <person name="Ashurst J.L."/>
            <person name="Howe K.L."/>
            <person name="Ashcroft K.J."/>
            <person name="Beare D.M."/>
            <person name="Burford D.C."/>
            <person name="Hunt S.E."/>
            <person name="Griffiths-Jones S."/>
            <person name="Jones M.C."/>
            <person name="Keenan S.J."/>
            <person name="Oliver K."/>
            <person name="Scott C.E."/>
            <person name="Ainscough R."/>
            <person name="Almeida J.P."/>
            <person name="Ambrose K.D."/>
            <person name="Andrews D.T."/>
            <person name="Ashwell R.I.S."/>
            <person name="Babbage A.K."/>
            <person name="Bagguley C.L."/>
            <person name="Bailey J."/>
            <person name="Bannerjee R."/>
            <person name="Barlow K.F."/>
            <person name="Bates K."/>
            <person name="Beasley H."/>
            <person name="Bird C.P."/>
            <person name="Bray-Allen S."/>
            <person name="Brown A.J."/>
            <person name="Brown J.Y."/>
            <person name="Burrill W."/>
            <person name="Carder C."/>
            <person name="Carter N.P."/>
            <person name="Chapman J.C."/>
            <person name="Clamp M.E."/>
            <person name="Clark S.Y."/>
            <person name="Clarke G."/>
            <person name="Clee C.M."/>
            <person name="Clegg S.C."/>
            <person name="Cobley V."/>
            <person name="Collins J.E."/>
            <person name="Corby N."/>
            <person name="Coville G.J."/>
            <person name="Deloukas P."/>
            <person name="Dhami P."/>
            <person name="Dunham I."/>
            <person name="Dunn M."/>
            <person name="Earthrowl M.E."/>
            <person name="Ellington A.G."/>
            <person name="Faulkner L."/>
            <person name="Frankish A.G."/>
            <person name="Frankland J."/>
            <person name="French L."/>
            <person name="Garner P."/>
            <person name="Garnett J."/>
            <person name="Gilbert J.G.R."/>
            <person name="Gilson C.J."/>
            <person name="Ghori J."/>
            <person name="Grafham D.V."/>
            <person name="Gribble S.M."/>
            <person name="Griffiths C."/>
            <person name="Hall R.E."/>
            <person name="Hammond S."/>
            <person name="Harley J.L."/>
            <person name="Hart E.A."/>
            <person name="Heath P.D."/>
            <person name="Howden P.J."/>
            <person name="Huckle E.J."/>
            <person name="Hunt P.J."/>
            <person name="Hunt A.R."/>
            <person name="Johnson C."/>
            <person name="Johnson D."/>
            <person name="Kay M."/>
            <person name="Kimberley A.M."/>
            <person name="King A."/>
            <person name="Laird G.K."/>
            <person name="Langford C.J."/>
            <person name="Lawlor S."/>
            <person name="Leongamornlert D.A."/>
            <person name="Lloyd D.M."/>
            <person name="Lloyd C."/>
            <person name="Loveland J.E."/>
            <person name="Lovell J."/>
            <person name="Martin S."/>
            <person name="Mashreghi-Mohammadi M."/>
            <person name="McLaren S.J."/>
            <person name="McMurray A."/>
            <person name="Milne S."/>
            <person name="Moore M.J.F."/>
            <person name="Nickerson T."/>
            <person name="Palmer S.A."/>
            <person name="Pearce A.V."/>
            <person name="Peck A.I."/>
            <person name="Pelan S."/>
            <person name="Phillimore B."/>
            <person name="Porter K.M."/>
            <person name="Rice C.M."/>
            <person name="Searle S."/>
            <person name="Sehra H.K."/>
            <person name="Shownkeen R."/>
            <person name="Skuce C.D."/>
            <person name="Smith M."/>
            <person name="Steward C.A."/>
            <person name="Sycamore N."/>
            <person name="Tester J."/>
            <person name="Thomas D.W."/>
            <person name="Tracey A."/>
            <person name="Tromans A."/>
            <person name="Tubby B."/>
            <person name="Wall M."/>
            <person name="Wallis J.M."/>
            <person name="West A.P."/>
            <person name="Whitehead S.L."/>
            <person name="Willey D.L."/>
            <person name="Wilming L."/>
            <person name="Wray P.W."/>
            <person name="Wright M.W."/>
            <person name="Young L."/>
            <person name="Coulson A."/>
            <person name="Durbin R.M."/>
            <person name="Hubbard T."/>
            <person name="Sulston J.E."/>
            <person name="Beck S."/>
            <person name="Bentley D.R."/>
            <person name="Rogers J."/>
            <person name="Ross M.T."/>
        </authorList>
    </citation>
    <scope>NUCLEOTIDE SEQUENCE [LARGE SCALE GENOMIC DNA]</scope>
</reference>
<reference key="3">
    <citation type="submission" date="2005-07" db="EMBL/GenBank/DDBJ databases">
        <authorList>
            <person name="Mural R.J."/>
            <person name="Istrail S."/>
            <person name="Sutton G.G."/>
            <person name="Florea L."/>
            <person name="Halpern A.L."/>
            <person name="Mobarry C.M."/>
            <person name="Lippert R."/>
            <person name="Walenz B."/>
            <person name="Shatkay H."/>
            <person name="Dew I."/>
            <person name="Miller J.R."/>
            <person name="Flanigan M.J."/>
            <person name="Edwards N.J."/>
            <person name="Bolanos R."/>
            <person name="Fasulo D."/>
            <person name="Halldorsson B.V."/>
            <person name="Hannenhalli S."/>
            <person name="Turner R."/>
            <person name="Yooseph S."/>
            <person name="Lu F."/>
            <person name="Nusskern D.R."/>
            <person name="Shue B.C."/>
            <person name="Zheng X.H."/>
            <person name="Zhong F."/>
            <person name="Delcher A.L."/>
            <person name="Huson D.H."/>
            <person name="Kravitz S.A."/>
            <person name="Mouchard L."/>
            <person name="Reinert K."/>
            <person name="Remington K.A."/>
            <person name="Clark A.G."/>
            <person name="Waterman M.S."/>
            <person name="Eichler E.E."/>
            <person name="Adams M.D."/>
            <person name="Hunkapiller M.W."/>
            <person name="Myers E.W."/>
            <person name="Venter J.C."/>
        </authorList>
    </citation>
    <scope>NUCLEOTIDE SEQUENCE [LARGE SCALE GENOMIC DNA]</scope>
</reference>
<reference key="4">
    <citation type="journal article" date="2004" name="Genome Res.">
        <title>The status, quality, and expansion of the NIH full-length cDNA project: the Mammalian Gene Collection (MGC).</title>
        <authorList>
            <consortium name="The MGC Project Team"/>
        </authorList>
    </citation>
    <scope>NUCLEOTIDE SEQUENCE [LARGE SCALE MRNA]</scope>
    <source>
        <tissue>Pancreas</tissue>
    </source>
</reference>
<reference key="5">
    <citation type="journal article" date="2003" name="J. Hum. Genet.">
        <title>High-density SNP map of human ITR, a gene associated with vascular remodeling.</title>
        <authorList>
            <person name="Iida A."/>
            <person name="Tanaka T."/>
            <person name="Nakamura Y."/>
        </authorList>
    </citation>
    <scope>GENE ORGANIZATION</scope>
</reference>
<reference key="6">
    <citation type="journal article" date="2006" name="Science">
        <title>The consensus coding sequences of human breast and colorectal cancers.</title>
        <authorList>
            <person name="Sjoeblom T."/>
            <person name="Jones S."/>
            <person name="Wood L.D."/>
            <person name="Parsons D.W."/>
            <person name="Lin J."/>
            <person name="Barber T.D."/>
            <person name="Mandelker D."/>
            <person name="Leary R.J."/>
            <person name="Ptak J."/>
            <person name="Silliman N."/>
            <person name="Szabo S."/>
            <person name="Buckhaults P."/>
            <person name="Farrell C."/>
            <person name="Meeh P."/>
            <person name="Markowitz S.D."/>
            <person name="Willis J."/>
            <person name="Dawson D."/>
            <person name="Willson J.K.V."/>
            <person name="Gazdar A.F."/>
            <person name="Hartigan J."/>
            <person name="Wu L."/>
            <person name="Liu C."/>
            <person name="Parmigiani G."/>
            <person name="Park B.H."/>
            <person name="Bachman K.E."/>
            <person name="Papadopoulos N."/>
            <person name="Vogelstein B."/>
            <person name="Kinzler K.W."/>
            <person name="Velculescu V.E."/>
        </authorList>
    </citation>
    <scope>VARIANT [LARGE SCALE ANALYSIS] ASN-32</scope>
</reference>
<dbReference type="EMBL" id="AK289850">
    <property type="protein sequence ID" value="BAF82539.1"/>
    <property type="molecule type" value="mRNA"/>
</dbReference>
<dbReference type="EMBL" id="AL359708">
    <property type="status" value="NOT_ANNOTATED_CDS"/>
    <property type="molecule type" value="Genomic_DNA"/>
</dbReference>
<dbReference type="EMBL" id="CH471085">
    <property type="protein sequence ID" value="EAX08944.1"/>
    <property type="molecule type" value="Genomic_DNA"/>
</dbReference>
<dbReference type="EMBL" id="BC052243">
    <property type="protein sequence ID" value="AAH52243.1"/>
    <property type="molecule type" value="mRNA"/>
</dbReference>
<dbReference type="CCDS" id="CCDS9472.1"/>
<dbReference type="RefSeq" id="NP_851320.1">
    <property type="nucleotide sequence ID" value="NM_180989.6"/>
</dbReference>
<dbReference type="SMR" id="Q86V85"/>
<dbReference type="BioGRID" id="127770">
    <property type="interactions" value="32"/>
</dbReference>
<dbReference type="FunCoup" id="Q86V85">
    <property type="interactions" value="855"/>
</dbReference>
<dbReference type="IntAct" id="Q86V85">
    <property type="interactions" value="16"/>
</dbReference>
<dbReference type="STRING" id="9606.ENSP00000366157"/>
<dbReference type="GlyCosmos" id="Q86V85">
    <property type="glycosylation" value="2 sites, No reported glycans"/>
</dbReference>
<dbReference type="GlyGen" id="Q86V85">
    <property type="glycosylation" value="5 sites, 1 N-linked glycan (1 site), 2 O-linked glycans (3 sites)"/>
</dbReference>
<dbReference type="iPTMnet" id="Q86V85"/>
<dbReference type="PhosphoSitePlus" id="Q86V85"/>
<dbReference type="SwissPalm" id="Q86V85"/>
<dbReference type="BioMuta" id="GPR180"/>
<dbReference type="DMDM" id="74750449"/>
<dbReference type="jPOST" id="Q86V85"/>
<dbReference type="MassIVE" id="Q86V85"/>
<dbReference type="PaxDb" id="9606-ENSP00000366157"/>
<dbReference type="PeptideAtlas" id="Q86V85"/>
<dbReference type="ProteomicsDB" id="69975"/>
<dbReference type="Pumba" id="Q86V85"/>
<dbReference type="Antibodypedia" id="53993">
    <property type="antibodies" value="180 antibodies from 28 providers"/>
</dbReference>
<dbReference type="DNASU" id="160897"/>
<dbReference type="Ensembl" id="ENST00000376958.5">
    <property type="protein sequence ID" value="ENSP00000366157.4"/>
    <property type="gene ID" value="ENSG00000152749.8"/>
</dbReference>
<dbReference type="GeneID" id="160897"/>
<dbReference type="KEGG" id="hsa:160897"/>
<dbReference type="MANE-Select" id="ENST00000376958.5">
    <property type="protein sequence ID" value="ENSP00000366157.4"/>
    <property type="RefSeq nucleotide sequence ID" value="NM_180989.6"/>
    <property type="RefSeq protein sequence ID" value="NP_851320.1"/>
</dbReference>
<dbReference type="UCSC" id="uc001vly.4">
    <property type="organism name" value="human"/>
</dbReference>
<dbReference type="AGR" id="HGNC:28899"/>
<dbReference type="CTD" id="160897"/>
<dbReference type="DisGeNET" id="160897"/>
<dbReference type="GeneCards" id="GPR180"/>
<dbReference type="HGNC" id="HGNC:28899">
    <property type="gene designation" value="GPR180"/>
</dbReference>
<dbReference type="HPA" id="ENSG00000152749">
    <property type="expression patterns" value="Low tissue specificity"/>
</dbReference>
<dbReference type="MIM" id="607787">
    <property type="type" value="gene"/>
</dbReference>
<dbReference type="neXtProt" id="NX_Q86V85"/>
<dbReference type="OpenTargets" id="ENSG00000152749"/>
<dbReference type="PharmGKB" id="PA144596429"/>
<dbReference type="VEuPathDB" id="HostDB:ENSG00000152749"/>
<dbReference type="eggNOG" id="KOG4290">
    <property type="taxonomic scope" value="Eukaryota"/>
</dbReference>
<dbReference type="GeneTree" id="ENSGT00940000153981"/>
<dbReference type="HOGENOM" id="CLU_040652_0_0_1"/>
<dbReference type="InParanoid" id="Q86V85"/>
<dbReference type="OMA" id="DHSCTEK"/>
<dbReference type="OrthoDB" id="45670at2759"/>
<dbReference type="PAN-GO" id="Q86V85">
    <property type="GO annotations" value="0 GO annotations based on evolutionary models"/>
</dbReference>
<dbReference type="PhylomeDB" id="Q86V85"/>
<dbReference type="TreeFam" id="TF314975"/>
<dbReference type="PathwayCommons" id="Q86V85"/>
<dbReference type="SignaLink" id="Q86V85"/>
<dbReference type="BioGRID-ORCS" id="160897">
    <property type="hits" value="10 hits in 1152 CRISPR screens"/>
</dbReference>
<dbReference type="ChiTaRS" id="GPR180">
    <property type="organism name" value="human"/>
</dbReference>
<dbReference type="GenomeRNAi" id="160897"/>
<dbReference type="Pharos" id="Q86V85">
    <property type="development level" value="Tbio"/>
</dbReference>
<dbReference type="PRO" id="PR:Q86V85"/>
<dbReference type="Proteomes" id="UP000005640">
    <property type="component" value="Chromosome 13"/>
</dbReference>
<dbReference type="RNAct" id="Q86V85">
    <property type="molecule type" value="protein"/>
</dbReference>
<dbReference type="Bgee" id="ENSG00000152749">
    <property type="expression patterns" value="Expressed in buccal mucosa cell and 154 other cell types or tissues"/>
</dbReference>
<dbReference type="GO" id="GO:0016020">
    <property type="term" value="C:membrane"/>
    <property type="evidence" value="ECO:0007669"/>
    <property type="project" value="UniProtKB-SubCell"/>
</dbReference>
<dbReference type="GO" id="GO:0045444">
    <property type="term" value="P:fat cell differentiation"/>
    <property type="evidence" value="ECO:0007669"/>
    <property type="project" value="Ensembl"/>
</dbReference>
<dbReference type="GO" id="GO:0007186">
    <property type="term" value="P:G protein-coupled receptor signaling pathway"/>
    <property type="evidence" value="ECO:0007669"/>
    <property type="project" value="InterPro"/>
</dbReference>
<dbReference type="GO" id="GO:0010467">
    <property type="term" value="P:gene expression"/>
    <property type="evidence" value="ECO:0007669"/>
    <property type="project" value="Ensembl"/>
</dbReference>
<dbReference type="GO" id="GO:0006091">
    <property type="term" value="P:generation of precursor metabolites and energy"/>
    <property type="evidence" value="ECO:0007669"/>
    <property type="project" value="Ensembl"/>
</dbReference>
<dbReference type="GO" id="GO:0006629">
    <property type="term" value="P:lipid metabolic process"/>
    <property type="evidence" value="ECO:0007669"/>
    <property type="project" value="Ensembl"/>
</dbReference>
<dbReference type="GO" id="GO:0032094">
    <property type="term" value="P:response to food"/>
    <property type="evidence" value="ECO:0007669"/>
    <property type="project" value="Ensembl"/>
</dbReference>
<dbReference type="GO" id="GO:0019236">
    <property type="term" value="P:response to pheromone"/>
    <property type="evidence" value="ECO:0007669"/>
    <property type="project" value="InterPro"/>
</dbReference>
<dbReference type="InterPro" id="IPR053880">
    <property type="entry name" value="GPR180-like_N"/>
</dbReference>
<dbReference type="InterPro" id="IPR047831">
    <property type="entry name" value="GPR180/TMEM145"/>
</dbReference>
<dbReference type="InterPro" id="IPR019336">
    <property type="entry name" value="GPR180/TMEM145_TM"/>
</dbReference>
<dbReference type="PANTHER" id="PTHR23252:SF29">
    <property type="entry name" value="INTEGRAL MEMBRANE PROTEIN GPR180"/>
    <property type="match status" value="1"/>
</dbReference>
<dbReference type="PANTHER" id="PTHR23252">
    <property type="entry name" value="INTIMAL THICKNESS RECEPTOR-RELATED"/>
    <property type="match status" value="1"/>
</dbReference>
<dbReference type="Pfam" id="PF21870">
    <property type="entry name" value="GP180_GOLD"/>
    <property type="match status" value="1"/>
</dbReference>
<dbReference type="Pfam" id="PF10192">
    <property type="entry name" value="GPR180-TMEM145_TM"/>
    <property type="match status" value="1"/>
</dbReference>
<proteinExistence type="evidence at protein level"/>
<keyword id="KW-0325">Glycoprotein</keyword>
<keyword id="KW-0472">Membrane</keyword>
<keyword id="KW-1267">Proteomics identification</keyword>
<keyword id="KW-1185">Reference proteome</keyword>
<keyword id="KW-0732">Signal</keyword>
<keyword id="KW-0812">Transmembrane</keyword>
<keyword id="KW-1133">Transmembrane helix</keyword>
<gene>
    <name type="primary">GPR180</name>
    <name type="synonym">ITR</name>
</gene>
<name>GP180_HUMAN</name>
<evidence type="ECO:0000255" key="1"/>
<evidence type="ECO:0000269" key="2">
    <source>
    </source>
</evidence>
<evidence type="ECO:0000305" key="3"/>
<protein>
    <recommendedName>
        <fullName>Integral membrane protein GPR180</fullName>
    </recommendedName>
    <alternativeName>
        <fullName>Intimal thickness-related receptor</fullName>
    </alternativeName>
</protein>
<accession>Q86V85</accession>
<accession>A8K1D5</accession>
<sequence length="440" mass="49395">MGGLRLLAVALTCCWWPQGSQGKTLRGSFSSTAAQDAQGQRIGHFEFHGDHALLCVRINNIAVAVGKEAKLYLFQAQEWLKLQQSSHGYSCSEKLSKAQLTMTMNQTEHNLTVSQIPSPQTWHVFYADKYTCQDDKENSQVEDIPFEMVLLNPDAEGNPFDHFSAGESGLHEFFFLLVLVYFVIACIYAQSLWQAIKKGGPMHMILKVLTTALLLQAGSALANYIHFSSYSKDGIGVPFMGSLAEFFDIASQIQMLYLLLSLCMGWTIVRMKKSQSRPLQWDSTPASTGIAVFIVMTQSVLLLWEQFEDISHHSYHSHHNLAGILLIVLRICLALSLGCGLYQIITVERSTLKREFYITFAKGCILWFLCHPVLACISVIFSDYQRDKVITIGVILCQSVSMVILYRLFLSHSLYWEVSSLSSVTLPLTISSGHKSRPHF</sequence>
<comment type="subcellular location">
    <subcellularLocation>
        <location evidence="3">Membrane</location>
        <topology evidence="3">Multi-pass membrane protein</topology>
    </subcellularLocation>
</comment>